<evidence type="ECO:0000255" key="1">
    <source>
        <dbReference type="HAMAP-Rule" id="MF_00204"/>
    </source>
</evidence>
<evidence type="ECO:0000305" key="2"/>
<name>UVRB_NEIMB</name>
<dbReference type="EMBL" id="Y14299">
    <property type="protein sequence ID" value="CAA74675.1"/>
    <property type="molecule type" value="Genomic_DNA"/>
</dbReference>
<dbReference type="EMBL" id="AE002098">
    <property type="protein sequence ID" value="AAF41706.1"/>
    <property type="molecule type" value="Genomic_DNA"/>
</dbReference>
<dbReference type="PIR" id="F81095">
    <property type="entry name" value="F81095"/>
</dbReference>
<dbReference type="RefSeq" id="NP_274350.1">
    <property type="nucleotide sequence ID" value="NC_003112.2"/>
</dbReference>
<dbReference type="SMR" id="O33395"/>
<dbReference type="FunCoup" id="O33395">
    <property type="interactions" value="172"/>
</dbReference>
<dbReference type="STRING" id="122586.NMB1331"/>
<dbReference type="PaxDb" id="122586-NMB1331"/>
<dbReference type="KEGG" id="nme:NMB1331"/>
<dbReference type="PATRIC" id="fig|122586.8.peg.1669"/>
<dbReference type="HOGENOM" id="CLU_009621_2_1_4"/>
<dbReference type="InParanoid" id="O33395"/>
<dbReference type="OrthoDB" id="9806651at2"/>
<dbReference type="Proteomes" id="UP000000425">
    <property type="component" value="Chromosome"/>
</dbReference>
<dbReference type="GO" id="GO:0005737">
    <property type="term" value="C:cytoplasm"/>
    <property type="evidence" value="ECO:0007669"/>
    <property type="project" value="UniProtKB-SubCell"/>
</dbReference>
<dbReference type="GO" id="GO:0009380">
    <property type="term" value="C:excinuclease repair complex"/>
    <property type="evidence" value="ECO:0000318"/>
    <property type="project" value="GO_Central"/>
</dbReference>
<dbReference type="GO" id="GO:0005524">
    <property type="term" value="F:ATP binding"/>
    <property type="evidence" value="ECO:0007669"/>
    <property type="project" value="UniProtKB-UniRule"/>
</dbReference>
<dbReference type="GO" id="GO:0016887">
    <property type="term" value="F:ATP hydrolysis activity"/>
    <property type="evidence" value="ECO:0007669"/>
    <property type="project" value="InterPro"/>
</dbReference>
<dbReference type="GO" id="GO:0003677">
    <property type="term" value="F:DNA binding"/>
    <property type="evidence" value="ECO:0007669"/>
    <property type="project" value="UniProtKB-UniRule"/>
</dbReference>
<dbReference type="GO" id="GO:0009381">
    <property type="term" value="F:excinuclease ABC activity"/>
    <property type="evidence" value="ECO:0007669"/>
    <property type="project" value="UniProtKB-UniRule"/>
</dbReference>
<dbReference type="GO" id="GO:0000715">
    <property type="term" value="P:nucleotide-excision repair, DNA damage recognition"/>
    <property type="evidence" value="ECO:0000318"/>
    <property type="project" value="GO_Central"/>
</dbReference>
<dbReference type="GO" id="GO:0009432">
    <property type="term" value="P:SOS response"/>
    <property type="evidence" value="ECO:0007669"/>
    <property type="project" value="UniProtKB-UniRule"/>
</dbReference>
<dbReference type="CDD" id="cd17916">
    <property type="entry name" value="DEXHc_UvrB"/>
    <property type="match status" value="1"/>
</dbReference>
<dbReference type="CDD" id="cd18790">
    <property type="entry name" value="SF2_C_UvrB"/>
    <property type="match status" value="1"/>
</dbReference>
<dbReference type="Gene3D" id="6.10.140.240">
    <property type="match status" value="1"/>
</dbReference>
<dbReference type="Gene3D" id="3.40.50.300">
    <property type="entry name" value="P-loop containing nucleotide triphosphate hydrolases"/>
    <property type="match status" value="3"/>
</dbReference>
<dbReference type="Gene3D" id="4.10.860.10">
    <property type="entry name" value="UVR domain"/>
    <property type="match status" value="1"/>
</dbReference>
<dbReference type="HAMAP" id="MF_00204">
    <property type="entry name" value="UvrB"/>
    <property type="match status" value="1"/>
</dbReference>
<dbReference type="InterPro" id="IPR006935">
    <property type="entry name" value="Helicase/UvrB_N"/>
</dbReference>
<dbReference type="InterPro" id="IPR014001">
    <property type="entry name" value="Helicase_ATP-bd"/>
</dbReference>
<dbReference type="InterPro" id="IPR001650">
    <property type="entry name" value="Helicase_C-like"/>
</dbReference>
<dbReference type="InterPro" id="IPR027417">
    <property type="entry name" value="P-loop_NTPase"/>
</dbReference>
<dbReference type="InterPro" id="IPR001943">
    <property type="entry name" value="UVR_dom"/>
</dbReference>
<dbReference type="InterPro" id="IPR036876">
    <property type="entry name" value="UVR_dom_sf"/>
</dbReference>
<dbReference type="InterPro" id="IPR004807">
    <property type="entry name" value="UvrB"/>
</dbReference>
<dbReference type="InterPro" id="IPR041471">
    <property type="entry name" value="UvrB_inter"/>
</dbReference>
<dbReference type="InterPro" id="IPR024759">
    <property type="entry name" value="UvrB_YAD/RRR_dom"/>
</dbReference>
<dbReference type="NCBIfam" id="NF003673">
    <property type="entry name" value="PRK05298.1"/>
    <property type="match status" value="1"/>
</dbReference>
<dbReference type="NCBIfam" id="TIGR00631">
    <property type="entry name" value="uvrb"/>
    <property type="match status" value="1"/>
</dbReference>
<dbReference type="PANTHER" id="PTHR24029">
    <property type="entry name" value="UVRABC SYSTEM PROTEIN B"/>
    <property type="match status" value="1"/>
</dbReference>
<dbReference type="PANTHER" id="PTHR24029:SF0">
    <property type="entry name" value="UVRABC SYSTEM PROTEIN B"/>
    <property type="match status" value="1"/>
</dbReference>
<dbReference type="Pfam" id="PF00271">
    <property type="entry name" value="Helicase_C"/>
    <property type="match status" value="1"/>
</dbReference>
<dbReference type="Pfam" id="PF04851">
    <property type="entry name" value="ResIII"/>
    <property type="match status" value="1"/>
</dbReference>
<dbReference type="Pfam" id="PF02151">
    <property type="entry name" value="UVR"/>
    <property type="match status" value="1"/>
</dbReference>
<dbReference type="Pfam" id="PF12344">
    <property type="entry name" value="UvrB"/>
    <property type="match status" value="1"/>
</dbReference>
<dbReference type="Pfam" id="PF17757">
    <property type="entry name" value="UvrB_inter"/>
    <property type="match status" value="1"/>
</dbReference>
<dbReference type="SMART" id="SM00487">
    <property type="entry name" value="DEXDc"/>
    <property type="match status" value="1"/>
</dbReference>
<dbReference type="SMART" id="SM00490">
    <property type="entry name" value="HELICc"/>
    <property type="match status" value="1"/>
</dbReference>
<dbReference type="SUPFAM" id="SSF46600">
    <property type="entry name" value="C-terminal UvrC-binding domain of UvrB"/>
    <property type="match status" value="1"/>
</dbReference>
<dbReference type="SUPFAM" id="SSF52540">
    <property type="entry name" value="P-loop containing nucleoside triphosphate hydrolases"/>
    <property type="match status" value="2"/>
</dbReference>
<dbReference type="PROSITE" id="PS51192">
    <property type="entry name" value="HELICASE_ATP_BIND_1"/>
    <property type="match status" value="1"/>
</dbReference>
<dbReference type="PROSITE" id="PS51194">
    <property type="entry name" value="HELICASE_CTER"/>
    <property type="match status" value="1"/>
</dbReference>
<dbReference type="PROSITE" id="PS50151">
    <property type="entry name" value="UVR"/>
    <property type="match status" value="1"/>
</dbReference>
<accession>O33395</accession>
<gene>
    <name evidence="1" type="primary">uvrB</name>
    <name type="ordered locus">NMB1331</name>
</gene>
<reference key="1">
    <citation type="submission" date="1998-02" db="EMBL/GenBank/DDBJ databases">
        <title>Detection and characterisation of meningococcal ultraviolet resistance gene (uvrB).</title>
        <authorList>
            <person name="Kizil G."/>
            <person name="Wilks K.E."/>
            <person name="Palmer H.M."/>
            <person name="Ala'Aldeen D.A.A."/>
        </authorList>
    </citation>
    <scope>NUCLEOTIDE SEQUENCE [GENOMIC DNA]</scope>
    <source>
        <strain>SD / Serogroup B / Serotype 15 / Subtype 16</strain>
    </source>
</reference>
<reference key="2">
    <citation type="journal article" date="2000" name="Science">
        <title>Complete genome sequence of Neisseria meningitidis serogroup B strain MC58.</title>
        <authorList>
            <person name="Tettelin H."/>
            <person name="Saunders N.J."/>
            <person name="Heidelberg J.F."/>
            <person name="Jeffries A.C."/>
            <person name="Nelson K.E."/>
            <person name="Eisen J.A."/>
            <person name="Ketchum K.A."/>
            <person name="Hood D.W."/>
            <person name="Peden J.F."/>
            <person name="Dodson R.J."/>
            <person name="Nelson W.C."/>
            <person name="Gwinn M.L."/>
            <person name="DeBoy R.T."/>
            <person name="Peterson J.D."/>
            <person name="Hickey E.K."/>
            <person name="Haft D.H."/>
            <person name="Salzberg S.L."/>
            <person name="White O."/>
            <person name="Fleischmann R.D."/>
            <person name="Dougherty B.A."/>
            <person name="Mason T.M."/>
            <person name="Ciecko A."/>
            <person name="Parksey D.S."/>
            <person name="Blair E."/>
            <person name="Cittone H."/>
            <person name="Clark E.B."/>
            <person name="Cotton M.D."/>
            <person name="Utterback T.R."/>
            <person name="Khouri H.M."/>
            <person name="Qin H."/>
            <person name="Vamathevan J.J."/>
            <person name="Gill J."/>
            <person name="Scarlato V."/>
            <person name="Masignani V."/>
            <person name="Pizza M."/>
            <person name="Grandi G."/>
            <person name="Sun L."/>
            <person name="Smith H.O."/>
            <person name="Fraser C.M."/>
            <person name="Moxon E.R."/>
            <person name="Rappuoli R."/>
            <person name="Venter J.C."/>
        </authorList>
    </citation>
    <scope>NUCLEOTIDE SEQUENCE [LARGE SCALE GENOMIC DNA]</scope>
    <source>
        <strain>ATCC BAA-335 / MC58</strain>
    </source>
</reference>
<feature type="chain" id="PRO_0000138416" description="UvrABC system protein B">
    <location>
        <begin position="1"/>
        <end position="675"/>
    </location>
</feature>
<feature type="domain" description="Helicase ATP-binding" evidence="1">
    <location>
        <begin position="32"/>
        <end position="417"/>
    </location>
</feature>
<feature type="domain" description="Helicase C-terminal" evidence="1">
    <location>
        <begin position="436"/>
        <end position="602"/>
    </location>
</feature>
<feature type="domain" description="UVR" evidence="1">
    <location>
        <begin position="634"/>
        <end position="669"/>
    </location>
</feature>
<feature type="short sequence motif" description="Beta-hairpin">
    <location>
        <begin position="98"/>
        <end position="121"/>
    </location>
</feature>
<feature type="binding site" evidence="1">
    <location>
        <begin position="45"/>
        <end position="52"/>
    </location>
    <ligand>
        <name>ATP</name>
        <dbReference type="ChEBI" id="CHEBI:30616"/>
    </ligand>
</feature>
<feature type="sequence conflict" description="In Ref. 1; CAA74675." evidence="2" ref="1">
    <original>E</original>
    <variation>Q</variation>
    <location>
        <position position="449"/>
    </location>
</feature>
<feature type="sequence conflict" description="In Ref. 1; CAA74675." evidence="2" ref="1">
    <original>Q</original>
    <variation>H</variation>
    <location>
        <position position="587"/>
    </location>
</feature>
<feature type="sequence conflict" description="In Ref. 1; CAA74675." evidence="2" ref="1">
    <original>GS</original>
    <variation>SG</variation>
    <location>
        <begin position="611"/>
        <end position="612"/>
    </location>
</feature>
<feature type="sequence conflict" description="In Ref. 1; CAA74675." evidence="2" ref="1">
    <original>LK</original>
    <variation>RQ</variation>
    <location>
        <begin position="616"/>
        <end position="617"/>
    </location>
</feature>
<feature type="sequence conflict" description="In Ref. 1; CAA74675." evidence="2" ref="1">
    <original>D</original>
    <variation>N</variation>
    <location>
        <position position="665"/>
    </location>
</feature>
<organism>
    <name type="scientific">Neisseria meningitidis serogroup B (strain ATCC BAA-335 / MC58)</name>
    <dbReference type="NCBI Taxonomy" id="122586"/>
    <lineage>
        <taxon>Bacteria</taxon>
        <taxon>Pseudomonadati</taxon>
        <taxon>Pseudomonadota</taxon>
        <taxon>Betaproteobacteria</taxon>
        <taxon>Neisseriales</taxon>
        <taxon>Neisseriaceae</taxon>
        <taxon>Neisseria</taxon>
    </lineage>
</organism>
<proteinExistence type="inferred from homology"/>
<keyword id="KW-0067">ATP-binding</keyword>
<keyword id="KW-0963">Cytoplasm</keyword>
<keyword id="KW-0227">DNA damage</keyword>
<keyword id="KW-0228">DNA excision</keyword>
<keyword id="KW-0234">DNA repair</keyword>
<keyword id="KW-0267">Excision nuclease</keyword>
<keyword id="KW-0547">Nucleotide-binding</keyword>
<keyword id="KW-1185">Reference proteome</keyword>
<keyword id="KW-0742">SOS response</keyword>
<sequence length="675" mass="76914">MEVIQYPNSPFKLHQPFPPAGDQPTAIAGLLEGLSDGLAYQTLLGVTGSGKTYTMANVIAQSGRPAIIMAHNKTLAAQLYAEMREFFPENAVEYFVSYYDYYQPEAYVPSRDLFIEKDSAINEHIEQMRLSATKNLMTRNDVIIVATVSAIYGIGDPTEYQQMVLSVKEGDTIEQRDIIATLVSMQYERGDLDFKRGSFRVRGDVIDVYPAESSENALRISLFDDEIDRLDMFDPLSGSLIQRVGRYTVFPSSHYVTPRDTVLRACESIKEELRERIEFFAREQRPVEQQRIEQRTRFDLEMLYEMGFCKGIENYSRHFSGKKEGEPPPTLMDYLPDNAIMFIDESHVTVTQIGGMYKGDASRKQNLVDYGFRLPSARDNRPLKFHEFEKVMPQTIFVSATPAKYEEEHAGQVVEQVVRPTGLVDPQIIIRPVATQVDDLMSEINDRIEKGERVLVTTLTKRMAEQLTDYYSELGIKVRYLHSDIDTVERVEIIRDLRLGLFDVLVGINLLREGLDIPEVSLVAILDADKEGFLRSHRSLIQTIGRAARNVNGVAILYADKITDSMKAAIDETERRREKQIKFNEEQGIVPQQIKKQVKDIIDGVYHEEDGSKGRLKGKNKVKVGEIHNEEDAIKEIAKLEKAMQQAARDLQFEEAAVLRDRIRDIKENLLFGAE</sequence>
<protein>
    <recommendedName>
        <fullName evidence="1">UvrABC system protein B</fullName>
        <shortName evidence="1">Protein UvrB</shortName>
    </recommendedName>
    <alternativeName>
        <fullName evidence="1">Excinuclease ABC subunit B</fullName>
    </alternativeName>
</protein>
<comment type="function">
    <text evidence="1">The UvrABC repair system catalyzes the recognition and processing of DNA lesions. A damage recognition complex composed of 2 UvrA and 2 UvrB subunits scans DNA for abnormalities. Upon binding of the UvrA(2)B(2) complex to a putative damaged site, the DNA wraps around one UvrB monomer. DNA wrap is dependent on ATP binding by UvrB and probably causes local melting of the DNA helix, facilitating insertion of UvrB beta-hairpin between the DNA strands. Then UvrB probes one DNA strand for the presence of a lesion. If a lesion is found the UvrA subunits dissociate and the UvrB-DNA preincision complex is formed. This complex is subsequently bound by UvrC and the second UvrB is released. If no lesion is found, the DNA wraps around the other UvrB subunit that will check the other stand for damage.</text>
</comment>
<comment type="subunit">
    <text evidence="1">Forms a heterotetramer with UvrA during the search for lesions. Interacts with UvrC in an incision complex.</text>
</comment>
<comment type="subcellular location">
    <subcellularLocation>
        <location evidence="1">Cytoplasm</location>
    </subcellularLocation>
</comment>
<comment type="domain">
    <text evidence="1">The beta-hairpin motif is involved in DNA binding.</text>
</comment>
<comment type="similarity">
    <text evidence="1">Belongs to the UvrB family.</text>
</comment>